<proteinExistence type="evidence at protein level"/>
<protein>
    <recommendedName>
        <fullName>Rho GTPase-activating protein 15</fullName>
    </recommendedName>
    <alternativeName>
        <fullName>ArhGAP15</fullName>
    </alternativeName>
    <alternativeName>
        <fullName>Rho-type GTPase-activating protein 15</fullName>
    </alternativeName>
</protein>
<comment type="function">
    <text evidence="1">GTPase activator for the Rho-type GTPases by converting them to an inactive GDP-bound state. Has activity toward RAC1. Overexpression results in an increase in actin stress fibers and cell contraction (By similarity).</text>
</comment>
<comment type="subcellular location">
    <subcellularLocation>
        <location evidence="1">Cytoplasm</location>
    </subcellularLocation>
    <subcellularLocation>
        <location evidence="1">Membrane</location>
        <topology evidence="1">Peripheral membrane protein</topology>
    </subcellularLocation>
</comment>
<comment type="domain">
    <text evidence="1">The PH domain is required for localization to the membrane.</text>
</comment>
<keyword id="KW-0963">Cytoplasm</keyword>
<keyword id="KW-0343">GTPase activation</keyword>
<keyword id="KW-0472">Membrane</keyword>
<keyword id="KW-0597">Phosphoprotein</keyword>
<keyword id="KW-1185">Reference proteome</keyword>
<gene>
    <name type="primary">Arhgap15</name>
</gene>
<accession>Q6AYC5</accession>
<organism>
    <name type="scientific">Rattus norvegicus</name>
    <name type="common">Rat</name>
    <dbReference type="NCBI Taxonomy" id="10116"/>
    <lineage>
        <taxon>Eukaryota</taxon>
        <taxon>Metazoa</taxon>
        <taxon>Chordata</taxon>
        <taxon>Craniata</taxon>
        <taxon>Vertebrata</taxon>
        <taxon>Euteleostomi</taxon>
        <taxon>Mammalia</taxon>
        <taxon>Eutheria</taxon>
        <taxon>Euarchontoglires</taxon>
        <taxon>Glires</taxon>
        <taxon>Rodentia</taxon>
        <taxon>Myomorpha</taxon>
        <taxon>Muroidea</taxon>
        <taxon>Muridae</taxon>
        <taxon>Murinae</taxon>
        <taxon>Rattus</taxon>
    </lineage>
</organism>
<sequence>MEKRTSCSVQTSTNCDNSLETLNSAHQATGAVQMRIKNANSHPDRQSQTKSMILTDAGKVTEPISRHRRNHSQHVLKDVIPPLEHPMVEKEGYLQKAKIADGGKKLRKNWSTSWIVLSGRKLEFYKDPKQQALPNVKPRPNAESVDLCGAHIEWAAKDKSSKKSVFQITTASGNEFLLQSDIDFLILDWFHAIKNAIDRLPKNPSFGSLELFSFQRSSSSEQPSHCHIDRKEQKPENRKSFMFRLHHSVSDTSDKNRVKSRLKKFISRRPSLKTLQEKGIIKDQIFGSHLHTVCEREHSTVPWFVKQCIEAVEKRGLEVDGIYRVSGNLATIQKLRFIVNQEEKLNLDDSQWEDIHVVTGALKMFFRELSEPLFPYSFFERFVEAIKKQDSDAKIETMKSLVKSLPPPNHDTMKILFGHLTKIVAKAAQNLMSTQSLGIVFGPTLLRAENESGNVAVHMVYQNQVAEFMLTEYDKIFSSEED</sequence>
<dbReference type="EMBL" id="BC079103">
    <property type="protein sequence ID" value="AAH79103.1"/>
    <property type="molecule type" value="mRNA"/>
</dbReference>
<dbReference type="RefSeq" id="NP_001013939.1">
    <property type="nucleotide sequence ID" value="NM_001013917.1"/>
</dbReference>
<dbReference type="SMR" id="Q6AYC5"/>
<dbReference type="FunCoup" id="Q6AYC5">
    <property type="interactions" value="489"/>
</dbReference>
<dbReference type="STRING" id="10116.ENSRNOP00000043804"/>
<dbReference type="iPTMnet" id="Q6AYC5"/>
<dbReference type="PhosphoSitePlus" id="Q6AYC5"/>
<dbReference type="PaxDb" id="10116-ENSRNOP00000043804"/>
<dbReference type="Ensembl" id="ENSRNOT00000049884.4">
    <property type="protein sequence ID" value="ENSRNOP00000043804.3"/>
    <property type="gene ID" value="ENSRNOG00000031168.4"/>
</dbReference>
<dbReference type="GeneID" id="295635"/>
<dbReference type="KEGG" id="rno:295635"/>
<dbReference type="UCSC" id="RGD:1359304">
    <property type="organism name" value="rat"/>
</dbReference>
<dbReference type="AGR" id="RGD:1359304"/>
<dbReference type="CTD" id="55843"/>
<dbReference type="RGD" id="1359304">
    <property type="gene designation" value="Arhgap15"/>
</dbReference>
<dbReference type="eggNOG" id="KOG1449">
    <property type="taxonomic scope" value="Eukaryota"/>
</dbReference>
<dbReference type="eggNOG" id="KOG1450">
    <property type="taxonomic scope" value="Eukaryota"/>
</dbReference>
<dbReference type="GeneTree" id="ENSGT00950000182860"/>
<dbReference type="HOGENOM" id="CLU_015883_1_0_1"/>
<dbReference type="InParanoid" id="Q6AYC5"/>
<dbReference type="OrthoDB" id="15061at9989"/>
<dbReference type="PhylomeDB" id="Q6AYC5"/>
<dbReference type="TreeFam" id="TF329345"/>
<dbReference type="Reactome" id="R-RNO-9013149">
    <property type="pathway name" value="RAC1 GTPase cycle"/>
</dbReference>
<dbReference type="PRO" id="PR:Q6AYC5"/>
<dbReference type="Proteomes" id="UP000002494">
    <property type="component" value="Chromosome 3"/>
</dbReference>
<dbReference type="Bgee" id="ENSRNOG00000031168">
    <property type="expression patterns" value="Expressed in thymus and 18 other cell types or tissues"/>
</dbReference>
<dbReference type="GO" id="GO:0005737">
    <property type="term" value="C:cytoplasm"/>
    <property type="evidence" value="ECO:0000318"/>
    <property type="project" value="GO_Central"/>
</dbReference>
<dbReference type="GO" id="GO:0005886">
    <property type="term" value="C:plasma membrane"/>
    <property type="evidence" value="ECO:0000318"/>
    <property type="project" value="GO_Central"/>
</dbReference>
<dbReference type="GO" id="GO:0005096">
    <property type="term" value="F:GTPase activator activity"/>
    <property type="evidence" value="ECO:0000266"/>
    <property type="project" value="RGD"/>
</dbReference>
<dbReference type="GO" id="GO:0008360">
    <property type="term" value="P:regulation of cell shape"/>
    <property type="evidence" value="ECO:0000266"/>
    <property type="project" value="RGD"/>
</dbReference>
<dbReference type="GO" id="GO:0007264">
    <property type="term" value="P:small GTPase-mediated signal transduction"/>
    <property type="evidence" value="ECO:0000318"/>
    <property type="project" value="GO_Central"/>
</dbReference>
<dbReference type="CDD" id="cd13233">
    <property type="entry name" value="PH_ARHGAP9-like"/>
    <property type="match status" value="1"/>
</dbReference>
<dbReference type="CDD" id="cd04403">
    <property type="entry name" value="RhoGAP_ARHGAP27_15_12_9"/>
    <property type="match status" value="1"/>
</dbReference>
<dbReference type="FunFam" id="1.10.555.10:FF:000003">
    <property type="entry name" value="Putative rho GTPase-activating protein 12"/>
    <property type="match status" value="1"/>
</dbReference>
<dbReference type="FunFam" id="2.30.29.30:FF:000260">
    <property type="entry name" value="Rho GTPase activating protein 15"/>
    <property type="match status" value="1"/>
</dbReference>
<dbReference type="Gene3D" id="2.30.29.30">
    <property type="entry name" value="Pleckstrin-homology domain (PH domain)/Phosphotyrosine-binding domain (PTB)"/>
    <property type="match status" value="1"/>
</dbReference>
<dbReference type="Gene3D" id="1.10.555.10">
    <property type="entry name" value="Rho GTPase activation protein"/>
    <property type="match status" value="1"/>
</dbReference>
<dbReference type="InterPro" id="IPR011993">
    <property type="entry name" value="PH-like_dom_sf"/>
</dbReference>
<dbReference type="InterPro" id="IPR001849">
    <property type="entry name" value="PH_domain"/>
</dbReference>
<dbReference type="InterPro" id="IPR050729">
    <property type="entry name" value="Rho-GAP"/>
</dbReference>
<dbReference type="InterPro" id="IPR008936">
    <property type="entry name" value="Rho_GTPase_activation_prot"/>
</dbReference>
<dbReference type="InterPro" id="IPR000198">
    <property type="entry name" value="RhoGAP_dom"/>
</dbReference>
<dbReference type="PANTHER" id="PTHR23176:SF108">
    <property type="entry name" value="RHO GTPASE-ACTIVATING PROTEIN 15"/>
    <property type="match status" value="1"/>
</dbReference>
<dbReference type="PANTHER" id="PTHR23176">
    <property type="entry name" value="RHO/RAC/CDC GTPASE-ACTIVATING PROTEIN"/>
    <property type="match status" value="1"/>
</dbReference>
<dbReference type="Pfam" id="PF00169">
    <property type="entry name" value="PH"/>
    <property type="match status" value="1"/>
</dbReference>
<dbReference type="Pfam" id="PF00620">
    <property type="entry name" value="RhoGAP"/>
    <property type="match status" value="1"/>
</dbReference>
<dbReference type="SMART" id="SM00233">
    <property type="entry name" value="PH"/>
    <property type="match status" value="1"/>
</dbReference>
<dbReference type="SMART" id="SM00324">
    <property type="entry name" value="RhoGAP"/>
    <property type="match status" value="1"/>
</dbReference>
<dbReference type="SUPFAM" id="SSF48350">
    <property type="entry name" value="GTPase activation domain, GAP"/>
    <property type="match status" value="1"/>
</dbReference>
<dbReference type="SUPFAM" id="SSF50729">
    <property type="entry name" value="PH domain-like"/>
    <property type="match status" value="1"/>
</dbReference>
<dbReference type="PROSITE" id="PS50003">
    <property type="entry name" value="PH_DOMAIN"/>
    <property type="match status" value="1"/>
</dbReference>
<dbReference type="PROSITE" id="PS50238">
    <property type="entry name" value="RHOGAP"/>
    <property type="match status" value="1"/>
</dbReference>
<evidence type="ECO:0000250" key="1"/>
<evidence type="ECO:0000250" key="2">
    <source>
        <dbReference type="UniProtKB" id="Q53QZ3"/>
    </source>
</evidence>
<evidence type="ECO:0000255" key="3">
    <source>
        <dbReference type="PROSITE-ProRule" id="PRU00145"/>
    </source>
</evidence>
<evidence type="ECO:0000255" key="4">
    <source>
        <dbReference type="PROSITE-ProRule" id="PRU00172"/>
    </source>
</evidence>
<evidence type="ECO:0007744" key="5">
    <source>
    </source>
</evidence>
<name>RHG15_RAT</name>
<feature type="chain" id="PRO_0000317576" description="Rho GTPase-activating protein 15">
    <location>
        <begin position="1"/>
        <end position="482"/>
    </location>
</feature>
<feature type="domain" description="PH" evidence="3">
    <location>
        <begin position="87"/>
        <end position="198"/>
    </location>
</feature>
<feature type="domain" description="Rho-GAP" evidence="4">
    <location>
        <begin position="288"/>
        <end position="477"/>
    </location>
</feature>
<feature type="site" description="Arginine finger; crucial for GTP hydrolysis by stabilizing the transition state" evidence="4">
    <location>
        <position position="324"/>
    </location>
</feature>
<feature type="modified residue" description="Phosphoserine" evidence="2">
    <location>
        <position position="51"/>
    </location>
</feature>
<feature type="modified residue" description="Phosphoserine" evidence="2">
    <location>
        <position position="111"/>
    </location>
</feature>
<feature type="modified residue" description="Phosphoserine" evidence="5">
    <location>
        <position position="205"/>
    </location>
</feature>
<feature type="modified residue" description="Phosphoserine" evidence="5">
    <location>
        <position position="208"/>
    </location>
</feature>
<feature type="modified residue" description="Phosphoserine" evidence="5">
    <location>
        <position position="250"/>
    </location>
</feature>
<reference key="1">
    <citation type="journal article" date="2004" name="Genome Res.">
        <title>The status, quality, and expansion of the NIH full-length cDNA project: the Mammalian Gene Collection (MGC).</title>
        <authorList>
            <consortium name="The MGC Project Team"/>
        </authorList>
    </citation>
    <scope>NUCLEOTIDE SEQUENCE [LARGE SCALE MRNA]</scope>
    <source>
        <tissue>Lung</tissue>
    </source>
</reference>
<reference key="2">
    <citation type="journal article" date="2012" name="Nat. Commun.">
        <title>Quantitative maps of protein phosphorylation sites across 14 different rat organs and tissues.</title>
        <authorList>
            <person name="Lundby A."/>
            <person name="Secher A."/>
            <person name="Lage K."/>
            <person name="Nordsborg N.B."/>
            <person name="Dmytriyev A."/>
            <person name="Lundby C."/>
            <person name="Olsen J.V."/>
        </authorList>
    </citation>
    <scope>PHOSPHORYLATION [LARGE SCALE ANALYSIS] AT SER-205; SER-208 AND SER-250</scope>
    <scope>IDENTIFICATION BY MASS SPECTROMETRY [LARGE SCALE ANALYSIS]</scope>
</reference>